<sequence length="223" mass="24848">MAVLSSRAMRAALGLAVLAVVIQLLRTWLSSKSYLFNQKDIAELAKQHAGMDFEVAFSKIIVELRKKHPGHILPDEDLQWIFVNAGGWMGSMCLLHASLTEYILLFGTAIDTGGHSGRYWADISDTVITGTFRQWKEGTTKSEVFYPGDTIVHVAGEATSVHWSGGTWMVEYGRGFIPSTMGFALADTIFSTQDFCTLFYTFRIYARCLLLETHTYLSELGLS</sequence>
<comment type="function">
    <text evidence="1">May function in lipid transport from the endoplasmic reticulum and be involved in a wide array of cellular functions probably through regulation of the biogenesis of lipid microdomains at the plasma membrane. May regulate calcium efflux at the endoplasmic reticulum (By similarity).</text>
</comment>
<comment type="subunit">
    <text evidence="5">Homotrimer (By similarity).</text>
</comment>
<comment type="subcellular location">
    <subcellularLocation>
        <location evidence="5">Nucleus inner membrane</location>
    </subcellularLocation>
    <subcellularLocation>
        <location evidence="5">Nucleus outer membrane</location>
    </subcellularLocation>
    <subcellularLocation>
        <location evidence="5">Nucleus envelope</location>
    </subcellularLocation>
    <subcellularLocation>
        <location evidence="5">Cytoplasmic vesicle</location>
    </subcellularLocation>
    <subcellularLocation>
        <location evidence="5">Endoplasmic reticulum membrane</location>
    </subcellularLocation>
    <subcellularLocation>
        <location evidence="5">Membrane</location>
        <topology evidence="5">Single-pass membrane protein</topology>
    </subcellularLocation>
    <text evidence="2 5">During interphase, detected at the inner and outer nuclear membrane and the endoplasmic reticulum. Detected on cytoplasmic vesicles during mitosis (By similarity). Targeted to lipid droplets, cholesterol and galactosylceramide-enriched domains of the endoplasmic reticulum (By similarity).</text>
</comment>
<comment type="domain">
    <text evidence="5">The C-terminal helices form a flat, hydrophobic surface that is probably tightly associated with the cytosolic surface of the endoplasmic reticulum membrane.</text>
</comment>
<comment type="miscellaneous">
    <text evidence="3">Sigma receptors are classified into two subtypes (Sigma-1 and Sigma-2) based on their different pharmacological profile.</text>
</comment>
<comment type="similarity">
    <text evidence="6">Belongs to the ERG2 family.</text>
</comment>
<organism>
    <name type="scientific">Taricha granulosa</name>
    <name type="common">Roughskin newt</name>
    <dbReference type="NCBI Taxonomy" id="8321"/>
    <lineage>
        <taxon>Eukaryota</taxon>
        <taxon>Metazoa</taxon>
        <taxon>Chordata</taxon>
        <taxon>Craniata</taxon>
        <taxon>Vertebrata</taxon>
        <taxon>Euteleostomi</taxon>
        <taxon>Amphibia</taxon>
        <taxon>Batrachia</taxon>
        <taxon>Caudata</taxon>
        <taxon>Salamandroidea</taxon>
        <taxon>Salamandridae</taxon>
        <taxon>Pleurodelinae</taxon>
        <taxon>Taricha</taxon>
    </lineage>
</organism>
<dbReference type="EMBL" id="AY726668">
    <property type="protein sequence ID" value="AAU34079.1"/>
    <property type="molecule type" value="mRNA"/>
</dbReference>
<dbReference type="SMR" id="Q645J3"/>
<dbReference type="GO" id="GO:0031410">
    <property type="term" value="C:cytoplasmic vesicle"/>
    <property type="evidence" value="ECO:0007669"/>
    <property type="project" value="UniProtKB-KW"/>
</dbReference>
<dbReference type="GO" id="GO:0005789">
    <property type="term" value="C:endoplasmic reticulum membrane"/>
    <property type="evidence" value="ECO:0007669"/>
    <property type="project" value="UniProtKB-SubCell"/>
</dbReference>
<dbReference type="GO" id="GO:0016020">
    <property type="term" value="C:membrane"/>
    <property type="evidence" value="ECO:0000250"/>
    <property type="project" value="UniProtKB"/>
</dbReference>
<dbReference type="GO" id="GO:0005637">
    <property type="term" value="C:nuclear inner membrane"/>
    <property type="evidence" value="ECO:0007669"/>
    <property type="project" value="UniProtKB-SubCell"/>
</dbReference>
<dbReference type="GO" id="GO:0005640">
    <property type="term" value="C:nuclear outer membrane"/>
    <property type="evidence" value="ECO:0007669"/>
    <property type="project" value="UniProtKB-SubCell"/>
</dbReference>
<dbReference type="GO" id="GO:0006869">
    <property type="term" value="P:lipid transport"/>
    <property type="evidence" value="ECO:0007669"/>
    <property type="project" value="UniProtKB-KW"/>
</dbReference>
<dbReference type="InterPro" id="IPR006716">
    <property type="entry name" value="ERG2_sigma1_rcpt-like"/>
</dbReference>
<dbReference type="PANTHER" id="PTHR10868">
    <property type="entry name" value="SIGMA 1-TYPE OPIOID RECEPTOR-RELATED"/>
    <property type="match status" value="1"/>
</dbReference>
<dbReference type="PANTHER" id="PTHR10868:SF1">
    <property type="entry name" value="SIGMA NON-OPIOID INTRACELLULAR RECEPTOR 1"/>
    <property type="match status" value="1"/>
</dbReference>
<dbReference type="Pfam" id="PF04622">
    <property type="entry name" value="ERG2_Sigma1R"/>
    <property type="match status" value="1"/>
</dbReference>
<gene>
    <name type="primary">SIGMAR1</name>
    <name type="synonym">OPRS1</name>
</gene>
<accession>Q645J3</accession>
<name>SGMR1_TARGR</name>
<feature type="chain" id="PRO_0000268659" description="Sigma non-opioid intracellular receptor 1">
    <location>
        <begin position="1"/>
        <end position="223"/>
    </location>
</feature>
<feature type="topological domain" description="Lumenal" evidence="5">
    <location>
        <begin position="1"/>
        <end position="7"/>
    </location>
</feature>
<feature type="transmembrane region" description="Helical" evidence="5">
    <location>
        <begin position="8"/>
        <end position="29"/>
    </location>
</feature>
<feature type="topological domain" description="Cytoplasmic" evidence="5">
    <location>
        <begin position="30"/>
        <end position="223"/>
    </location>
</feature>
<feature type="region of interest" description="Important for ligand-binding" evidence="4">
    <location>
        <begin position="98"/>
        <end position="105"/>
    </location>
</feature>
<feature type="region of interest" description="C-terminal hydrophobic region" evidence="6">
    <location>
        <begin position="176"/>
        <end position="223"/>
    </location>
</feature>
<feature type="site" description="Important for ligand binding" evidence="5">
    <location>
        <position position="125"/>
    </location>
</feature>
<feature type="site" description="Important for ligand binding" evidence="5">
    <location>
        <position position="171"/>
    </location>
</feature>
<keyword id="KW-0968">Cytoplasmic vesicle</keyword>
<keyword id="KW-0256">Endoplasmic reticulum</keyword>
<keyword id="KW-0445">Lipid transport</keyword>
<keyword id="KW-0472">Membrane</keyword>
<keyword id="KW-0539">Nucleus</keyword>
<keyword id="KW-0675">Receptor</keyword>
<keyword id="KW-0812">Transmembrane</keyword>
<keyword id="KW-1133">Transmembrane helix</keyword>
<keyword id="KW-0813">Transport</keyword>
<reference key="1">
    <citation type="submission" date="2004-08" db="EMBL/GenBank/DDBJ databases">
        <title>Cloning, expression, and characterization of a sigma receptor from the brain of the rough-skinned newt, Taricha granulosa.</title>
        <authorList>
            <person name="Bradford C.S."/>
            <person name="Moore F.L."/>
        </authorList>
    </citation>
    <scope>NUCLEOTIDE SEQUENCE [MRNA]</scope>
    <source>
        <tissue>Brain</tissue>
    </source>
</reference>
<proteinExistence type="evidence at transcript level"/>
<protein>
    <recommendedName>
        <fullName>Sigma non-opioid intracellular receptor 1</fullName>
    </recommendedName>
    <alternativeName>
        <fullName>Sigma 1-type opioid receptor</fullName>
        <shortName>Sigma1-receptor</shortName>
        <shortName>Sigma1R</shortName>
    </alternativeName>
</protein>
<evidence type="ECO:0000250" key="1"/>
<evidence type="ECO:0000250" key="2">
    <source>
        <dbReference type="UniProtKB" id="O55242"/>
    </source>
</evidence>
<evidence type="ECO:0000250" key="3">
    <source>
        <dbReference type="UniProtKB" id="Q5BJF2"/>
    </source>
</evidence>
<evidence type="ECO:0000250" key="4">
    <source>
        <dbReference type="UniProtKB" id="Q60492"/>
    </source>
</evidence>
<evidence type="ECO:0000250" key="5">
    <source>
        <dbReference type="UniProtKB" id="Q99720"/>
    </source>
</evidence>
<evidence type="ECO:0000305" key="6"/>